<organism>
    <name type="scientific">Rhyncholestes raphanurus</name>
    <name type="common">Chilean shrew opossum</name>
    <dbReference type="NCBI Taxonomy" id="33559"/>
    <lineage>
        <taxon>Eukaryota</taxon>
        <taxon>Metazoa</taxon>
        <taxon>Chordata</taxon>
        <taxon>Craniata</taxon>
        <taxon>Vertebrata</taxon>
        <taxon>Euteleostomi</taxon>
        <taxon>Mammalia</taxon>
        <taxon>Metatheria</taxon>
        <taxon>Paucituberculata</taxon>
        <taxon>Caenolestidae</taxon>
        <taxon>Rhyncholestes</taxon>
    </lineage>
</organism>
<evidence type="ECO:0000250" key="1"/>
<evidence type="ECO:0000250" key="2">
    <source>
        <dbReference type="UniProtKB" id="P00157"/>
    </source>
</evidence>
<evidence type="ECO:0000255" key="3">
    <source>
        <dbReference type="PROSITE-ProRule" id="PRU00967"/>
    </source>
</evidence>
<evidence type="ECO:0000255" key="4">
    <source>
        <dbReference type="PROSITE-ProRule" id="PRU00968"/>
    </source>
</evidence>
<sequence>MTNLRKNHPLMKIVNDAFIDLPAPSNISAWWNFGSLLGICLVLQILTGLFLAMHYISDTTMAFSSVAHICRDVNYGWLIRNMHANGASMFFMCLYLHIGRGIYYGSYLYKETWNIGVILLFTVMATAFVGYVLPWGQMSFWGATVITNLLSAIPYIGTTLVEWIWGGFSVDKSTLTRFFAFHFILPFVILALAIVHLLFLHETGSNNPSGINPDSDKIPFHPYYTIKDILGLSLMILVLLLLAMFSPDMLGDPDNFSPANPLNTPPHIKPEWYFLFAYAILRSIPNKLGGVLALLASILILLAIPLLHTSNQRSLMFRPISQTLFWILTADLFVLTWIGGQPVEQPYIIIGQTASILYFMIIIILMPMAGLFEKYMLKPKW</sequence>
<geneLocation type="mitochondrion"/>
<gene>
    <name type="primary">MT-CYB</name>
    <name type="synonym">COB</name>
    <name type="synonym">CYTB</name>
    <name type="synonym">MTCYB</name>
</gene>
<feature type="chain" id="PRO_0000254755" description="Cytochrome b">
    <location>
        <begin position="1"/>
        <end position="381"/>
    </location>
</feature>
<feature type="transmembrane region" description="Helical" evidence="2">
    <location>
        <begin position="33"/>
        <end position="53"/>
    </location>
</feature>
<feature type="transmembrane region" description="Helical" evidence="2">
    <location>
        <begin position="77"/>
        <end position="98"/>
    </location>
</feature>
<feature type="transmembrane region" description="Helical" evidence="2">
    <location>
        <begin position="113"/>
        <end position="133"/>
    </location>
</feature>
<feature type="transmembrane region" description="Helical" evidence="2">
    <location>
        <begin position="178"/>
        <end position="198"/>
    </location>
</feature>
<feature type="transmembrane region" description="Helical" evidence="2">
    <location>
        <begin position="226"/>
        <end position="246"/>
    </location>
</feature>
<feature type="transmembrane region" description="Helical" evidence="2">
    <location>
        <begin position="288"/>
        <end position="308"/>
    </location>
</feature>
<feature type="transmembrane region" description="Helical" evidence="2">
    <location>
        <begin position="320"/>
        <end position="340"/>
    </location>
</feature>
<feature type="transmembrane region" description="Helical" evidence="2">
    <location>
        <begin position="347"/>
        <end position="367"/>
    </location>
</feature>
<feature type="binding site" description="axial binding residue" evidence="2">
    <location>
        <position position="83"/>
    </location>
    <ligand>
        <name>heme b</name>
        <dbReference type="ChEBI" id="CHEBI:60344"/>
        <label>b562</label>
    </ligand>
    <ligandPart>
        <name>Fe</name>
        <dbReference type="ChEBI" id="CHEBI:18248"/>
    </ligandPart>
</feature>
<feature type="binding site" description="axial binding residue" evidence="2">
    <location>
        <position position="97"/>
    </location>
    <ligand>
        <name>heme b</name>
        <dbReference type="ChEBI" id="CHEBI:60344"/>
        <label>b566</label>
    </ligand>
    <ligandPart>
        <name>Fe</name>
        <dbReference type="ChEBI" id="CHEBI:18248"/>
    </ligandPart>
</feature>
<feature type="binding site" description="axial binding residue" evidence="2">
    <location>
        <position position="182"/>
    </location>
    <ligand>
        <name>heme b</name>
        <dbReference type="ChEBI" id="CHEBI:60344"/>
        <label>b562</label>
    </ligand>
    <ligandPart>
        <name>Fe</name>
        <dbReference type="ChEBI" id="CHEBI:18248"/>
    </ligandPart>
</feature>
<feature type="binding site" description="axial binding residue" evidence="2">
    <location>
        <position position="196"/>
    </location>
    <ligand>
        <name>heme b</name>
        <dbReference type="ChEBI" id="CHEBI:60344"/>
        <label>b566</label>
    </ligand>
    <ligandPart>
        <name>Fe</name>
        <dbReference type="ChEBI" id="CHEBI:18248"/>
    </ligandPart>
</feature>
<feature type="binding site" evidence="2">
    <location>
        <position position="201"/>
    </location>
    <ligand>
        <name>a ubiquinone</name>
        <dbReference type="ChEBI" id="CHEBI:16389"/>
    </ligand>
</feature>
<name>CYB_RHYRA</name>
<protein>
    <recommendedName>
        <fullName>Cytochrome b</fullName>
    </recommendedName>
    <alternativeName>
        <fullName>Complex III subunit 3</fullName>
    </alternativeName>
    <alternativeName>
        <fullName>Complex III subunit III</fullName>
    </alternativeName>
    <alternativeName>
        <fullName>Cytochrome b-c1 complex subunit 3</fullName>
    </alternativeName>
    <alternativeName>
        <fullName>Ubiquinol-cytochrome-c reductase complex cytochrome b subunit</fullName>
    </alternativeName>
</protein>
<proteinExistence type="inferred from homology"/>
<comment type="function">
    <text evidence="2">Component of the ubiquinol-cytochrome c reductase complex (complex III or cytochrome b-c1 complex) that is part of the mitochondrial respiratory chain. The b-c1 complex mediates electron transfer from ubiquinol to cytochrome c. Contributes to the generation of a proton gradient across the mitochondrial membrane that is then used for ATP synthesis.</text>
</comment>
<comment type="cofactor">
    <cofactor evidence="2">
        <name>heme b</name>
        <dbReference type="ChEBI" id="CHEBI:60344"/>
    </cofactor>
    <text evidence="2">Binds 2 heme b groups non-covalently.</text>
</comment>
<comment type="subunit">
    <text evidence="2">The cytochrome bc1 complex contains 11 subunits: 3 respiratory subunits (MT-CYB, CYC1 and UQCRFS1), 2 core proteins (UQCRC1 and UQCRC2) and 6 low-molecular weight proteins (UQCRH/QCR6, UQCRB/QCR7, UQCRQ/QCR8, UQCR10/QCR9, UQCR11/QCR10 and a cleavage product of UQCRFS1). This cytochrome bc1 complex then forms a dimer.</text>
</comment>
<comment type="subcellular location">
    <subcellularLocation>
        <location evidence="2">Mitochondrion inner membrane</location>
        <topology evidence="2">Multi-pass membrane protein</topology>
    </subcellularLocation>
</comment>
<comment type="miscellaneous">
    <text evidence="1">Heme 1 (or BL or b562) is low-potential and absorbs at about 562 nm, and heme 2 (or BH or b566) is high-potential and absorbs at about 566 nm.</text>
</comment>
<comment type="similarity">
    <text evidence="3 4">Belongs to the cytochrome b family.</text>
</comment>
<comment type="caution">
    <text evidence="2">The full-length protein contains only eight transmembrane helices, not nine as predicted by bioinformatics tools.</text>
</comment>
<dbReference type="EMBL" id="AJ508399">
    <property type="protein sequence ID" value="CAD48225.1"/>
    <property type="molecule type" value="Genomic_DNA"/>
</dbReference>
<dbReference type="RefSeq" id="YP_003725.1">
    <property type="nucleotide sequence ID" value="NC_005829.1"/>
</dbReference>
<dbReference type="SMR" id="Q70XI6"/>
<dbReference type="GeneID" id="2769069"/>
<dbReference type="CTD" id="4519"/>
<dbReference type="GO" id="GO:0005743">
    <property type="term" value="C:mitochondrial inner membrane"/>
    <property type="evidence" value="ECO:0007669"/>
    <property type="project" value="UniProtKB-SubCell"/>
</dbReference>
<dbReference type="GO" id="GO:0045275">
    <property type="term" value="C:respiratory chain complex III"/>
    <property type="evidence" value="ECO:0007669"/>
    <property type="project" value="InterPro"/>
</dbReference>
<dbReference type="GO" id="GO:0046872">
    <property type="term" value="F:metal ion binding"/>
    <property type="evidence" value="ECO:0007669"/>
    <property type="project" value="UniProtKB-KW"/>
</dbReference>
<dbReference type="GO" id="GO:0008121">
    <property type="term" value="F:ubiquinol-cytochrome-c reductase activity"/>
    <property type="evidence" value="ECO:0007669"/>
    <property type="project" value="InterPro"/>
</dbReference>
<dbReference type="GO" id="GO:0006122">
    <property type="term" value="P:mitochondrial electron transport, ubiquinol to cytochrome c"/>
    <property type="evidence" value="ECO:0007669"/>
    <property type="project" value="TreeGrafter"/>
</dbReference>
<dbReference type="CDD" id="cd00290">
    <property type="entry name" value="cytochrome_b_C"/>
    <property type="match status" value="1"/>
</dbReference>
<dbReference type="CDD" id="cd00284">
    <property type="entry name" value="Cytochrome_b_N"/>
    <property type="match status" value="1"/>
</dbReference>
<dbReference type="FunFam" id="1.20.810.10:FF:000002">
    <property type="entry name" value="Cytochrome b"/>
    <property type="match status" value="1"/>
</dbReference>
<dbReference type="Gene3D" id="1.20.810.10">
    <property type="entry name" value="Cytochrome Bc1 Complex, Chain C"/>
    <property type="match status" value="1"/>
</dbReference>
<dbReference type="InterPro" id="IPR005798">
    <property type="entry name" value="Cyt_b/b6_C"/>
</dbReference>
<dbReference type="InterPro" id="IPR036150">
    <property type="entry name" value="Cyt_b/b6_C_sf"/>
</dbReference>
<dbReference type="InterPro" id="IPR005797">
    <property type="entry name" value="Cyt_b/b6_N"/>
</dbReference>
<dbReference type="InterPro" id="IPR027387">
    <property type="entry name" value="Cytb/b6-like_sf"/>
</dbReference>
<dbReference type="InterPro" id="IPR030689">
    <property type="entry name" value="Cytochrome_b"/>
</dbReference>
<dbReference type="InterPro" id="IPR048260">
    <property type="entry name" value="Cytochrome_b_C_euk/bac"/>
</dbReference>
<dbReference type="InterPro" id="IPR048259">
    <property type="entry name" value="Cytochrome_b_N_euk/bac"/>
</dbReference>
<dbReference type="InterPro" id="IPR016174">
    <property type="entry name" value="Di-haem_cyt_TM"/>
</dbReference>
<dbReference type="PANTHER" id="PTHR19271">
    <property type="entry name" value="CYTOCHROME B"/>
    <property type="match status" value="1"/>
</dbReference>
<dbReference type="PANTHER" id="PTHR19271:SF16">
    <property type="entry name" value="CYTOCHROME B"/>
    <property type="match status" value="1"/>
</dbReference>
<dbReference type="Pfam" id="PF00032">
    <property type="entry name" value="Cytochrom_B_C"/>
    <property type="match status" value="1"/>
</dbReference>
<dbReference type="Pfam" id="PF00033">
    <property type="entry name" value="Cytochrome_B"/>
    <property type="match status" value="1"/>
</dbReference>
<dbReference type="PIRSF" id="PIRSF038885">
    <property type="entry name" value="COB"/>
    <property type="match status" value="1"/>
</dbReference>
<dbReference type="SUPFAM" id="SSF81648">
    <property type="entry name" value="a domain/subunit of cytochrome bc1 complex (Ubiquinol-cytochrome c reductase)"/>
    <property type="match status" value="1"/>
</dbReference>
<dbReference type="SUPFAM" id="SSF81342">
    <property type="entry name" value="Transmembrane di-heme cytochromes"/>
    <property type="match status" value="1"/>
</dbReference>
<dbReference type="PROSITE" id="PS51003">
    <property type="entry name" value="CYTB_CTER"/>
    <property type="match status" value="1"/>
</dbReference>
<dbReference type="PROSITE" id="PS51002">
    <property type="entry name" value="CYTB_NTER"/>
    <property type="match status" value="1"/>
</dbReference>
<accession>Q70XI6</accession>
<keyword id="KW-0249">Electron transport</keyword>
<keyword id="KW-0349">Heme</keyword>
<keyword id="KW-0408">Iron</keyword>
<keyword id="KW-0472">Membrane</keyword>
<keyword id="KW-0479">Metal-binding</keyword>
<keyword id="KW-0496">Mitochondrion</keyword>
<keyword id="KW-0999">Mitochondrion inner membrane</keyword>
<keyword id="KW-0679">Respiratory chain</keyword>
<keyword id="KW-0812">Transmembrane</keyword>
<keyword id="KW-1133">Transmembrane helix</keyword>
<keyword id="KW-0813">Transport</keyword>
<keyword id="KW-0830">Ubiquinone</keyword>
<reference key="1">
    <citation type="journal article" date="2004" name="Gene">
        <title>Marsupial relationships and a timeline for marsupial radiation in South Gondwana.</title>
        <authorList>
            <person name="Nilsson M.A."/>
            <person name="Arnason U."/>
            <person name="Spencer P.B.S."/>
            <person name="Janke A."/>
        </authorList>
    </citation>
    <scope>NUCLEOTIDE SEQUENCE [GENOMIC DNA]</scope>
</reference>